<dbReference type="EMBL" id="AE000782">
    <property type="protein sequence ID" value="AAB90421.1"/>
    <property type="molecule type" value="Genomic_DNA"/>
</dbReference>
<dbReference type="PIR" id="C69354">
    <property type="entry name" value="C69354"/>
</dbReference>
<dbReference type="SMR" id="O29423"/>
<dbReference type="STRING" id="224325.AF_0835"/>
<dbReference type="PaxDb" id="224325-AF_0835"/>
<dbReference type="EnsemblBacteria" id="AAB90421">
    <property type="protein sequence ID" value="AAB90421"/>
    <property type="gene ID" value="AF_0835"/>
</dbReference>
<dbReference type="KEGG" id="afu:AF_0835"/>
<dbReference type="HOGENOM" id="CLU_2203982_0_0_2"/>
<dbReference type="Proteomes" id="UP000002199">
    <property type="component" value="Chromosome"/>
</dbReference>
<dbReference type="GO" id="GO:0016020">
    <property type="term" value="C:membrane"/>
    <property type="evidence" value="ECO:0007669"/>
    <property type="project" value="UniProtKB-SubCell"/>
</dbReference>
<evidence type="ECO:0000255" key="1"/>
<evidence type="ECO:0000305" key="2"/>
<gene>
    <name type="ordered locus">AF_0835</name>
</gene>
<organism>
    <name type="scientific">Archaeoglobus fulgidus (strain ATCC 49558 / DSM 4304 / JCM 9628 / NBRC 100126 / VC-16)</name>
    <dbReference type="NCBI Taxonomy" id="224325"/>
    <lineage>
        <taxon>Archaea</taxon>
        <taxon>Methanobacteriati</taxon>
        <taxon>Methanobacteriota</taxon>
        <taxon>Archaeoglobi</taxon>
        <taxon>Archaeoglobales</taxon>
        <taxon>Archaeoglobaceae</taxon>
        <taxon>Archaeoglobus</taxon>
    </lineage>
</organism>
<keyword id="KW-0472">Membrane</keyword>
<keyword id="KW-1185">Reference proteome</keyword>
<keyword id="KW-0812">Transmembrane</keyword>
<keyword id="KW-1133">Transmembrane helix</keyword>
<feature type="chain" id="PRO_0000127930" description="Uncharacterized protein AF_0835">
    <location>
        <begin position="1"/>
        <end position="107"/>
    </location>
</feature>
<feature type="transmembrane region" description="Helical" evidence="1">
    <location>
        <begin position="9"/>
        <end position="31"/>
    </location>
</feature>
<sequence length="107" mass="12512">MEKRRAEIAAAIITAPTILAMMSTVLRALIFSSCIKNFLIFSMLKHSSYCLAILVYQKNRKAVMWGSDLFYHLRGFSSIFEQKTYIYESILSLQRKNRVRFKLPRII</sequence>
<protein>
    <recommendedName>
        <fullName>Uncharacterized protein AF_0835</fullName>
    </recommendedName>
</protein>
<proteinExistence type="predicted"/>
<name>Y835_ARCFU</name>
<comment type="subcellular location">
    <subcellularLocation>
        <location evidence="2">Membrane</location>
        <topology evidence="2">Single-pass membrane protein</topology>
    </subcellularLocation>
</comment>
<accession>O29423</accession>
<reference key="1">
    <citation type="journal article" date="1997" name="Nature">
        <title>The complete genome sequence of the hyperthermophilic, sulphate-reducing archaeon Archaeoglobus fulgidus.</title>
        <authorList>
            <person name="Klenk H.-P."/>
            <person name="Clayton R.A."/>
            <person name="Tomb J.-F."/>
            <person name="White O."/>
            <person name="Nelson K.E."/>
            <person name="Ketchum K.A."/>
            <person name="Dodson R.J."/>
            <person name="Gwinn M.L."/>
            <person name="Hickey E.K."/>
            <person name="Peterson J.D."/>
            <person name="Richardson D.L."/>
            <person name="Kerlavage A.R."/>
            <person name="Graham D.E."/>
            <person name="Kyrpides N.C."/>
            <person name="Fleischmann R.D."/>
            <person name="Quackenbush J."/>
            <person name="Lee N.H."/>
            <person name="Sutton G.G."/>
            <person name="Gill S.R."/>
            <person name="Kirkness E.F."/>
            <person name="Dougherty B.A."/>
            <person name="McKenney K."/>
            <person name="Adams M.D."/>
            <person name="Loftus B.J."/>
            <person name="Peterson S.N."/>
            <person name="Reich C.I."/>
            <person name="McNeil L.K."/>
            <person name="Badger J.H."/>
            <person name="Glodek A."/>
            <person name="Zhou L."/>
            <person name="Overbeek R."/>
            <person name="Gocayne J.D."/>
            <person name="Weidman J.F."/>
            <person name="McDonald L.A."/>
            <person name="Utterback T.R."/>
            <person name="Cotton M.D."/>
            <person name="Spriggs T."/>
            <person name="Artiach P."/>
            <person name="Kaine B.P."/>
            <person name="Sykes S.M."/>
            <person name="Sadow P.W."/>
            <person name="D'Andrea K.P."/>
            <person name="Bowman C."/>
            <person name="Fujii C."/>
            <person name="Garland S.A."/>
            <person name="Mason T.M."/>
            <person name="Olsen G.J."/>
            <person name="Fraser C.M."/>
            <person name="Smith H.O."/>
            <person name="Woese C.R."/>
            <person name="Venter J.C."/>
        </authorList>
    </citation>
    <scope>NUCLEOTIDE SEQUENCE [LARGE SCALE GENOMIC DNA]</scope>
    <source>
        <strain>ATCC 49558 / DSM 4304 / JCM 9628 / NBRC 100126 / VC-16</strain>
    </source>
</reference>